<dbReference type="EC" id="3.1.1.29" evidence="1"/>
<dbReference type="EMBL" id="CP000688">
    <property type="protein sequence ID" value="ABQ17155.1"/>
    <property type="molecule type" value="Genomic_DNA"/>
</dbReference>
<dbReference type="SMR" id="A5FRL3"/>
<dbReference type="KEGG" id="deb:DehaBAV1_0570"/>
<dbReference type="PATRIC" id="fig|216389.18.peg.616"/>
<dbReference type="HOGENOM" id="CLU_062456_4_1_0"/>
<dbReference type="GO" id="GO:0005737">
    <property type="term" value="C:cytoplasm"/>
    <property type="evidence" value="ECO:0007669"/>
    <property type="project" value="UniProtKB-SubCell"/>
</dbReference>
<dbReference type="GO" id="GO:0004045">
    <property type="term" value="F:peptidyl-tRNA hydrolase activity"/>
    <property type="evidence" value="ECO:0007669"/>
    <property type="project" value="UniProtKB-UniRule"/>
</dbReference>
<dbReference type="GO" id="GO:0000049">
    <property type="term" value="F:tRNA binding"/>
    <property type="evidence" value="ECO:0007669"/>
    <property type="project" value="UniProtKB-UniRule"/>
</dbReference>
<dbReference type="GO" id="GO:0006515">
    <property type="term" value="P:protein quality control for misfolded or incompletely synthesized proteins"/>
    <property type="evidence" value="ECO:0007669"/>
    <property type="project" value="UniProtKB-UniRule"/>
</dbReference>
<dbReference type="GO" id="GO:0072344">
    <property type="term" value="P:rescue of stalled ribosome"/>
    <property type="evidence" value="ECO:0007669"/>
    <property type="project" value="UniProtKB-UniRule"/>
</dbReference>
<dbReference type="CDD" id="cd00462">
    <property type="entry name" value="PTH"/>
    <property type="match status" value="1"/>
</dbReference>
<dbReference type="FunFam" id="3.40.50.1470:FF:000001">
    <property type="entry name" value="Peptidyl-tRNA hydrolase"/>
    <property type="match status" value="1"/>
</dbReference>
<dbReference type="Gene3D" id="3.40.50.1470">
    <property type="entry name" value="Peptidyl-tRNA hydrolase"/>
    <property type="match status" value="1"/>
</dbReference>
<dbReference type="HAMAP" id="MF_00083">
    <property type="entry name" value="Pept_tRNA_hydro_bact"/>
    <property type="match status" value="1"/>
</dbReference>
<dbReference type="InterPro" id="IPR001328">
    <property type="entry name" value="Pept_tRNA_hydro"/>
</dbReference>
<dbReference type="InterPro" id="IPR036416">
    <property type="entry name" value="Pept_tRNA_hydro_sf"/>
</dbReference>
<dbReference type="NCBIfam" id="TIGR00447">
    <property type="entry name" value="pth"/>
    <property type="match status" value="1"/>
</dbReference>
<dbReference type="PANTHER" id="PTHR17224">
    <property type="entry name" value="PEPTIDYL-TRNA HYDROLASE"/>
    <property type="match status" value="1"/>
</dbReference>
<dbReference type="PANTHER" id="PTHR17224:SF1">
    <property type="entry name" value="PEPTIDYL-TRNA HYDROLASE"/>
    <property type="match status" value="1"/>
</dbReference>
<dbReference type="Pfam" id="PF01195">
    <property type="entry name" value="Pept_tRNA_hydro"/>
    <property type="match status" value="1"/>
</dbReference>
<dbReference type="SUPFAM" id="SSF53178">
    <property type="entry name" value="Peptidyl-tRNA hydrolase-like"/>
    <property type="match status" value="1"/>
</dbReference>
<gene>
    <name evidence="1" type="primary">pth</name>
    <name type="ordered locus">DehaBAV1_0570</name>
</gene>
<evidence type="ECO:0000255" key="1">
    <source>
        <dbReference type="HAMAP-Rule" id="MF_00083"/>
    </source>
</evidence>
<sequence length="189" mass="20379">MKLIIGLGNPGKEYSGNRHNVGFQCLSRFAKENHISFDKKCCLSRTGSGRINDEEIVLAKPQTYMNLSGKAVNQLLRRYNLKAADIIVVQDDLDLPAGKLRLRLGGSAGGHNGVSSIITDIGTKEFIRLKIGIGKPDARNNGAEVVDHVLGNFGGEEREIIETAIARAAEALACLITSGLDTASNRFNC</sequence>
<name>PTH_DEHMB</name>
<protein>
    <recommendedName>
        <fullName evidence="1">Peptidyl-tRNA hydrolase</fullName>
        <shortName evidence="1">Pth</shortName>
        <ecNumber evidence="1">3.1.1.29</ecNumber>
    </recommendedName>
</protein>
<accession>A5FRL3</accession>
<reference key="1">
    <citation type="submission" date="2007-05" db="EMBL/GenBank/DDBJ databases">
        <title>Complete sequence of Dehalococcoides sp. BAV1.</title>
        <authorList>
            <consortium name="US DOE Joint Genome Institute"/>
            <person name="Copeland A."/>
            <person name="Lucas S."/>
            <person name="Lapidus A."/>
            <person name="Barry K."/>
            <person name="Detter J.C."/>
            <person name="Glavina del Rio T."/>
            <person name="Hammon N."/>
            <person name="Israni S."/>
            <person name="Pitluck S."/>
            <person name="Lowry S."/>
            <person name="Clum A."/>
            <person name="Schmutz J."/>
            <person name="Larimer F."/>
            <person name="Land M."/>
            <person name="Hauser L."/>
            <person name="Kyrpides N."/>
            <person name="Kim E."/>
            <person name="Ritalahti K.M."/>
            <person name="Loeffler F."/>
            <person name="Richardson P."/>
        </authorList>
    </citation>
    <scope>NUCLEOTIDE SEQUENCE [LARGE SCALE GENOMIC DNA]</scope>
    <source>
        <strain>ATCC BAA-2100 / JCM 16839 / KCTC 5957 / BAV1</strain>
    </source>
</reference>
<organism>
    <name type="scientific">Dehalococcoides mccartyi (strain ATCC BAA-2100 / JCM 16839 / KCTC 5957 / BAV1)</name>
    <dbReference type="NCBI Taxonomy" id="216389"/>
    <lineage>
        <taxon>Bacteria</taxon>
        <taxon>Bacillati</taxon>
        <taxon>Chloroflexota</taxon>
        <taxon>Dehalococcoidia</taxon>
        <taxon>Dehalococcoidales</taxon>
        <taxon>Dehalococcoidaceae</taxon>
        <taxon>Dehalococcoides</taxon>
    </lineage>
</organism>
<comment type="function">
    <text evidence="1">Hydrolyzes ribosome-free peptidyl-tRNAs (with 1 or more amino acids incorporated), which drop off the ribosome during protein synthesis, or as a result of ribosome stalling.</text>
</comment>
<comment type="function">
    <text evidence="1">Catalyzes the release of premature peptidyl moieties from peptidyl-tRNA molecules trapped in stalled 50S ribosomal subunits, and thus maintains levels of free tRNAs and 50S ribosomes.</text>
</comment>
<comment type="catalytic activity">
    <reaction evidence="1">
        <text>an N-acyl-L-alpha-aminoacyl-tRNA + H2O = an N-acyl-L-amino acid + a tRNA + H(+)</text>
        <dbReference type="Rhea" id="RHEA:54448"/>
        <dbReference type="Rhea" id="RHEA-COMP:10123"/>
        <dbReference type="Rhea" id="RHEA-COMP:13883"/>
        <dbReference type="ChEBI" id="CHEBI:15377"/>
        <dbReference type="ChEBI" id="CHEBI:15378"/>
        <dbReference type="ChEBI" id="CHEBI:59874"/>
        <dbReference type="ChEBI" id="CHEBI:78442"/>
        <dbReference type="ChEBI" id="CHEBI:138191"/>
        <dbReference type="EC" id="3.1.1.29"/>
    </reaction>
</comment>
<comment type="subunit">
    <text evidence="1">Monomer.</text>
</comment>
<comment type="subcellular location">
    <subcellularLocation>
        <location evidence="1">Cytoplasm</location>
    </subcellularLocation>
</comment>
<comment type="similarity">
    <text evidence="1">Belongs to the PTH family.</text>
</comment>
<feature type="chain" id="PRO_1000075338" description="Peptidyl-tRNA hydrolase">
    <location>
        <begin position="1"/>
        <end position="189"/>
    </location>
</feature>
<feature type="active site" description="Proton acceptor" evidence="1">
    <location>
        <position position="19"/>
    </location>
</feature>
<feature type="binding site" evidence="1">
    <location>
        <position position="14"/>
    </location>
    <ligand>
        <name>tRNA</name>
        <dbReference type="ChEBI" id="CHEBI:17843"/>
    </ligand>
</feature>
<feature type="binding site" evidence="1">
    <location>
        <position position="64"/>
    </location>
    <ligand>
        <name>tRNA</name>
        <dbReference type="ChEBI" id="CHEBI:17843"/>
    </ligand>
</feature>
<feature type="binding site" evidence="1">
    <location>
        <position position="66"/>
    </location>
    <ligand>
        <name>tRNA</name>
        <dbReference type="ChEBI" id="CHEBI:17843"/>
    </ligand>
</feature>
<feature type="binding site" evidence="1">
    <location>
        <position position="112"/>
    </location>
    <ligand>
        <name>tRNA</name>
        <dbReference type="ChEBI" id="CHEBI:17843"/>
    </ligand>
</feature>
<feature type="site" description="Discriminates between blocked and unblocked aminoacyl-tRNA" evidence="1">
    <location>
        <position position="9"/>
    </location>
</feature>
<feature type="site" description="Stabilizes the basic form of H active site to accept a proton" evidence="1">
    <location>
        <position position="91"/>
    </location>
</feature>
<keyword id="KW-0963">Cytoplasm</keyword>
<keyword id="KW-0378">Hydrolase</keyword>
<keyword id="KW-0694">RNA-binding</keyword>
<keyword id="KW-0820">tRNA-binding</keyword>
<proteinExistence type="inferred from homology"/>